<evidence type="ECO:0000250" key="1"/>
<evidence type="ECO:0000255" key="2">
    <source>
        <dbReference type="PROSITE-ProRule" id="PRU00169"/>
    </source>
</evidence>
<evidence type="ECO:0000255" key="3">
    <source>
        <dbReference type="PROSITE-ProRule" id="PRU01091"/>
    </source>
</evidence>
<evidence type="ECO:0000305" key="4"/>
<sequence>MDTMRQRILVVDDDASLAEMLTIVLRGEGFDTAVIGDGTQALTAVRELRPDLVLLDLMLPGMNGIDVCRVLRADSGVPIVMLTAKTDTVDVVLGLESGADDYIMKPFKPKELVARVRARLRRNDDEPAEMLSIADVEIDVPAHKVTRNGEQISLTPLEFDLLVALARKPRQVFTRDVLLEQVWGYRHPADTRLVNVHVQRLRAKVEKDPENPTVVLTVRGVGYKAGPP</sequence>
<feature type="chain" id="PRO_0000081144" description="DNA-binding response regulator MtrA">
    <location>
        <begin position="1"/>
        <end position="228"/>
    </location>
</feature>
<feature type="domain" description="Response regulatory" evidence="2">
    <location>
        <begin position="7"/>
        <end position="120"/>
    </location>
</feature>
<feature type="DNA-binding region" description="OmpR/PhoB-type" evidence="3">
    <location>
        <begin position="128"/>
        <end position="227"/>
    </location>
</feature>
<feature type="modified residue" description="4-aspartylphosphate" evidence="2">
    <location>
        <position position="56"/>
    </location>
</feature>
<comment type="function">
    <text evidence="1">Member of the two-component regulatory system MtrA/MtrB.</text>
</comment>
<comment type="PTM">
    <text evidence="4">Phosphorylated by MtrB.</text>
</comment>
<protein>
    <recommendedName>
        <fullName>DNA-binding response regulator MtrA</fullName>
    </recommendedName>
</protein>
<keyword id="KW-0238">DNA-binding</keyword>
<keyword id="KW-0597">Phosphoprotein</keyword>
<keyword id="KW-1185">Reference proteome</keyword>
<keyword id="KW-0804">Transcription</keyword>
<keyword id="KW-0805">Transcription regulation</keyword>
<keyword id="KW-0902">Two-component regulatory system</keyword>
<organism>
    <name type="scientific">Mycobacterium bovis (strain ATCC BAA-935 / AF2122/97)</name>
    <dbReference type="NCBI Taxonomy" id="233413"/>
    <lineage>
        <taxon>Bacteria</taxon>
        <taxon>Bacillati</taxon>
        <taxon>Actinomycetota</taxon>
        <taxon>Actinomycetes</taxon>
        <taxon>Mycobacteriales</taxon>
        <taxon>Mycobacteriaceae</taxon>
        <taxon>Mycobacterium</taxon>
        <taxon>Mycobacterium tuberculosis complex</taxon>
    </lineage>
</organism>
<reference key="1">
    <citation type="journal article" date="2003" name="Proc. Natl. Acad. Sci. U.S.A.">
        <title>The complete genome sequence of Mycobacterium bovis.</title>
        <authorList>
            <person name="Garnier T."/>
            <person name="Eiglmeier K."/>
            <person name="Camus J.-C."/>
            <person name="Medina N."/>
            <person name="Mansoor H."/>
            <person name="Pryor M."/>
            <person name="Duthoy S."/>
            <person name="Grondin S."/>
            <person name="Lacroix C."/>
            <person name="Monsempe C."/>
            <person name="Simon S."/>
            <person name="Harris B."/>
            <person name="Atkin R."/>
            <person name="Doggett J."/>
            <person name="Mayes R."/>
            <person name="Keating L."/>
            <person name="Wheeler P.R."/>
            <person name="Parkhill J."/>
            <person name="Barrell B.G."/>
            <person name="Cole S.T."/>
            <person name="Gordon S.V."/>
            <person name="Hewinson R.G."/>
        </authorList>
    </citation>
    <scope>NUCLEOTIDE SEQUENCE [LARGE SCALE GENOMIC DNA]</scope>
    <source>
        <strain>ATCC BAA-935 / AF2122/97</strain>
    </source>
</reference>
<reference key="2">
    <citation type="journal article" date="2017" name="Genome Announc.">
        <title>Updated reference genome sequence and annotation of Mycobacterium bovis AF2122/97.</title>
        <authorList>
            <person name="Malone K.M."/>
            <person name="Farrell D."/>
            <person name="Stuber T.P."/>
            <person name="Schubert O.T."/>
            <person name="Aebersold R."/>
            <person name="Robbe-Austerman S."/>
            <person name="Gordon S.V."/>
        </authorList>
    </citation>
    <scope>NUCLEOTIDE SEQUENCE [LARGE SCALE GENOMIC DNA]</scope>
    <scope>GENOME REANNOTATION</scope>
    <source>
        <strain>ATCC BAA-935 / AF2122/97</strain>
    </source>
</reference>
<gene>
    <name type="primary">mtrA</name>
    <name type="ordered locus">BQ2027_MB3274C</name>
</gene>
<proteinExistence type="inferred from homology"/>
<dbReference type="EMBL" id="LT708304">
    <property type="protein sequence ID" value="SIU01903.1"/>
    <property type="molecule type" value="Genomic_DNA"/>
</dbReference>
<dbReference type="RefSeq" id="NP_856919.1">
    <property type="nucleotide sequence ID" value="NC_002945.3"/>
</dbReference>
<dbReference type="RefSeq" id="WP_003899985.1">
    <property type="nucleotide sequence ID" value="NC_002945.4"/>
</dbReference>
<dbReference type="SMR" id="P0A5Z5"/>
<dbReference type="GeneID" id="45427240"/>
<dbReference type="KEGG" id="mbo:BQ2027_MB3274C"/>
<dbReference type="PATRIC" id="fig|233413.5.peg.3601"/>
<dbReference type="Proteomes" id="UP000001419">
    <property type="component" value="Chromosome"/>
</dbReference>
<dbReference type="GO" id="GO:0005829">
    <property type="term" value="C:cytosol"/>
    <property type="evidence" value="ECO:0007669"/>
    <property type="project" value="TreeGrafter"/>
</dbReference>
<dbReference type="GO" id="GO:0032993">
    <property type="term" value="C:protein-DNA complex"/>
    <property type="evidence" value="ECO:0007669"/>
    <property type="project" value="TreeGrafter"/>
</dbReference>
<dbReference type="GO" id="GO:0000156">
    <property type="term" value="F:phosphorelay response regulator activity"/>
    <property type="evidence" value="ECO:0007669"/>
    <property type="project" value="InterPro"/>
</dbReference>
<dbReference type="GO" id="GO:0000976">
    <property type="term" value="F:transcription cis-regulatory region binding"/>
    <property type="evidence" value="ECO:0007669"/>
    <property type="project" value="InterPro"/>
</dbReference>
<dbReference type="GO" id="GO:0045893">
    <property type="term" value="P:positive regulation of DNA-templated transcription"/>
    <property type="evidence" value="ECO:0007669"/>
    <property type="project" value="InterPro"/>
</dbReference>
<dbReference type="CDD" id="cd17626">
    <property type="entry name" value="REC_OmpR_MtrA-like"/>
    <property type="match status" value="1"/>
</dbReference>
<dbReference type="CDD" id="cd00383">
    <property type="entry name" value="trans_reg_C"/>
    <property type="match status" value="1"/>
</dbReference>
<dbReference type="FunFam" id="1.10.10.10:FF:000033">
    <property type="entry name" value="DNA-binding response regulator MtrA"/>
    <property type="match status" value="1"/>
</dbReference>
<dbReference type="FunFam" id="3.40.50.2300:FF:000001">
    <property type="entry name" value="DNA-binding response regulator PhoB"/>
    <property type="match status" value="1"/>
</dbReference>
<dbReference type="Gene3D" id="3.40.50.2300">
    <property type="match status" value="1"/>
</dbReference>
<dbReference type="Gene3D" id="6.10.250.690">
    <property type="match status" value="1"/>
</dbReference>
<dbReference type="Gene3D" id="1.10.10.10">
    <property type="entry name" value="Winged helix-like DNA-binding domain superfamily/Winged helix DNA-binding domain"/>
    <property type="match status" value="1"/>
</dbReference>
<dbReference type="InterPro" id="IPR011006">
    <property type="entry name" value="CheY-like_superfamily"/>
</dbReference>
<dbReference type="InterPro" id="IPR047673">
    <property type="entry name" value="MtrA_REC"/>
</dbReference>
<dbReference type="InterPro" id="IPR047671">
    <property type="entry name" value="MtrAB_MtrA"/>
</dbReference>
<dbReference type="InterPro" id="IPR001867">
    <property type="entry name" value="OmpR/PhoB-type_DNA-bd"/>
</dbReference>
<dbReference type="InterPro" id="IPR001789">
    <property type="entry name" value="Sig_transdc_resp-reg_receiver"/>
</dbReference>
<dbReference type="InterPro" id="IPR039420">
    <property type="entry name" value="WalR-like"/>
</dbReference>
<dbReference type="InterPro" id="IPR036388">
    <property type="entry name" value="WH-like_DNA-bd_sf"/>
</dbReference>
<dbReference type="NCBIfam" id="NF040689">
    <property type="entry name" value="MtrAB_MtrA"/>
    <property type="match status" value="1"/>
</dbReference>
<dbReference type="PANTHER" id="PTHR48111:SF21">
    <property type="entry name" value="DNA-BINDING DUAL MASTER TRANSCRIPTIONAL REGULATOR RPAA"/>
    <property type="match status" value="1"/>
</dbReference>
<dbReference type="PANTHER" id="PTHR48111">
    <property type="entry name" value="REGULATOR OF RPOS"/>
    <property type="match status" value="1"/>
</dbReference>
<dbReference type="Pfam" id="PF00072">
    <property type="entry name" value="Response_reg"/>
    <property type="match status" value="1"/>
</dbReference>
<dbReference type="Pfam" id="PF00486">
    <property type="entry name" value="Trans_reg_C"/>
    <property type="match status" value="1"/>
</dbReference>
<dbReference type="SMART" id="SM00448">
    <property type="entry name" value="REC"/>
    <property type="match status" value="1"/>
</dbReference>
<dbReference type="SMART" id="SM00862">
    <property type="entry name" value="Trans_reg_C"/>
    <property type="match status" value="1"/>
</dbReference>
<dbReference type="SUPFAM" id="SSF52172">
    <property type="entry name" value="CheY-like"/>
    <property type="match status" value="1"/>
</dbReference>
<dbReference type="PROSITE" id="PS51755">
    <property type="entry name" value="OMPR_PHOB"/>
    <property type="match status" value="1"/>
</dbReference>
<dbReference type="PROSITE" id="PS50110">
    <property type="entry name" value="RESPONSE_REGULATORY"/>
    <property type="match status" value="1"/>
</dbReference>
<name>MTRA_MYCBO</name>
<accession>P0A5Z5</accession>
<accession>A0A1R3Y3J6</accession>
<accession>Q50447</accession>
<accession>X2BNU1</accession>